<organism>
    <name type="scientific">Rickettsia conorii (strain ATCC VR-613 / Malish 7)</name>
    <dbReference type="NCBI Taxonomy" id="272944"/>
    <lineage>
        <taxon>Bacteria</taxon>
        <taxon>Pseudomonadati</taxon>
        <taxon>Pseudomonadota</taxon>
        <taxon>Alphaproteobacteria</taxon>
        <taxon>Rickettsiales</taxon>
        <taxon>Rickettsiaceae</taxon>
        <taxon>Rickettsieae</taxon>
        <taxon>Rickettsia</taxon>
        <taxon>spotted fever group</taxon>
    </lineage>
</organism>
<name>CLPP_RICCN</name>
<dbReference type="EC" id="3.4.21.92" evidence="1"/>
<dbReference type="EMBL" id="AE006914">
    <property type="protein sequence ID" value="AAL03284.1"/>
    <property type="status" value="ALT_INIT"/>
    <property type="molecule type" value="Genomic_DNA"/>
</dbReference>
<dbReference type="PIR" id="B97793">
    <property type="entry name" value="B97793"/>
</dbReference>
<dbReference type="RefSeq" id="WP_004998361.1">
    <property type="nucleotide sequence ID" value="NC_003103.1"/>
</dbReference>
<dbReference type="SMR" id="Q92HM5"/>
<dbReference type="MEROPS" id="S14.001"/>
<dbReference type="GeneID" id="95361280"/>
<dbReference type="KEGG" id="rco:RC0746"/>
<dbReference type="HOGENOM" id="CLU_058707_3_2_5"/>
<dbReference type="Proteomes" id="UP000000816">
    <property type="component" value="Chromosome"/>
</dbReference>
<dbReference type="GO" id="GO:0005737">
    <property type="term" value="C:cytoplasm"/>
    <property type="evidence" value="ECO:0007669"/>
    <property type="project" value="UniProtKB-SubCell"/>
</dbReference>
<dbReference type="GO" id="GO:0009368">
    <property type="term" value="C:endopeptidase Clp complex"/>
    <property type="evidence" value="ECO:0007669"/>
    <property type="project" value="TreeGrafter"/>
</dbReference>
<dbReference type="GO" id="GO:0004176">
    <property type="term" value="F:ATP-dependent peptidase activity"/>
    <property type="evidence" value="ECO:0007669"/>
    <property type="project" value="InterPro"/>
</dbReference>
<dbReference type="GO" id="GO:0051117">
    <property type="term" value="F:ATPase binding"/>
    <property type="evidence" value="ECO:0007669"/>
    <property type="project" value="TreeGrafter"/>
</dbReference>
<dbReference type="GO" id="GO:0004252">
    <property type="term" value="F:serine-type endopeptidase activity"/>
    <property type="evidence" value="ECO:0007669"/>
    <property type="project" value="UniProtKB-UniRule"/>
</dbReference>
<dbReference type="GO" id="GO:0006515">
    <property type="term" value="P:protein quality control for misfolded or incompletely synthesized proteins"/>
    <property type="evidence" value="ECO:0007669"/>
    <property type="project" value="TreeGrafter"/>
</dbReference>
<dbReference type="CDD" id="cd07017">
    <property type="entry name" value="S14_ClpP_2"/>
    <property type="match status" value="1"/>
</dbReference>
<dbReference type="FunFam" id="3.90.226.10:FF:000001">
    <property type="entry name" value="ATP-dependent Clp protease proteolytic subunit"/>
    <property type="match status" value="1"/>
</dbReference>
<dbReference type="Gene3D" id="3.90.226.10">
    <property type="entry name" value="2-enoyl-CoA Hydratase, Chain A, domain 1"/>
    <property type="match status" value="1"/>
</dbReference>
<dbReference type="HAMAP" id="MF_00444">
    <property type="entry name" value="ClpP"/>
    <property type="match status" value="1"/>
</dbReference>
<dbReference type="InterPro" id="IPR001907">
    <property type="entry name" value="ClpP"/>
</dbReference>
<dbReference type="InterPro" id="IPR029045">
    <property type="entry name" value="ClpP/crotonase-like_dom_sf"/>
</dbReference>
<dbReference type="InterPro" id="IPR023562">
    <property type="entry name" value="ClpP/TepA"/>
</dbReference>
<dbReference type="InterPro" id="IPR033135">
    <property type="entry name" value="ClpP_His_AS"/>
</dbReference>
<dbReference type="InterPro" id="IPR018215">
    <property type="entry name" value="ClpP_Ser_AS"/>
</dbReference>
<dbReference type="NCBIfam" id="TIGR00493">
    <property type="entry name" value="clpP"/>
    <property type="match status" value="1"/>
</dbReference>
<dbReference type="NCBIfam" id="NF001368">
    <property type="entry name" value="PRK00277.1"/>
    <property type="match status" value="1"/>
</dbReference>
<dbReference type="NCBIfam" id="NF009205">
    <property type="entry name" value="PRK12553.1"/>
    <property type="match status" value="1"/>
</dbReference>
<dbReference type="PANTHER" id="PTHR10381">
    <property type="entry name" value="ATP-DEPENDENT CLP PROTEASE PROTEOLYTIC SUBUNIT"/>
    <property type="match status" value="1"/>
</dbReference>
<dbReference type="PANTHER" id="PTHR10381:SF70">
    <property type="entry name" value="ATP-DEPENDENT CLP PROTEASE PROTEOLYTIC SUBUNIT"/>
    <property type="match status" value="1"/>
</dbReference>
<dbReference type="Pfam" id="PF00574">
    <property type="entry name" value="CLP_protease"/>
    <property type="match status" value="1"/>
</dbReference>
<dbReference type="PRINTS" id="PR00127">
    <property type="entry name" value="CLPPROTEASEP"/>
</dbReference>
<dbReference type="SUPFAM" id="SSF52096">
    <property type="entry name" value="ClpP/crotonase"/>
    <property type="match status" value="1"/>
</dbReference>
<dbReference type="PROSITE" id="PS00382">
    <property type="entry name" value="CLP_PROTEASE_HIS"/>
    <property type="match status" value="1"/>
</dbReference>
<dbReference type="PROSITE" id="PS00381">
    <property type="entry name" value="CLP_PROTEASE_SER"/>
    <property type="match status" value="1"/>
</dbReference>
<sequence>MSYVPIVIEPTSRGERAYDIYSRLLKERIIFVCSTVEDHMANLIVAQLLFLEAENPKKDIYMYINSPGGVVTAGLAIYDTMQYIKPKVATLCIGQACSMGSLLLCGGEKGMRYSLPHSRIMIHQPSGGYKGQATDIEIHAQETLKIKRLLNELYSKHTEQELKHIEKSMERDNFMSPEEAKKFGLVDNIMSSRDAMALLAK</sequence>
<proteinExistence type="inferred from homology"/>
<comment type="function">
    <text evidence="1">Cleaves peptides in various proteins in a process that requires ATP hydrolysis. Has a chymotrypsin-like activity. Plays a major role in the degradation of misfolded proteins.</text>
</comment>
<comment type="catalytic activity">
    <reaction evidence="1">
        <text>Hydrolysis of proteins to small peptides in the presence of ATP and magnesium. alpha-casein is the usual test substrate. In the absence of ATP, only oligopeptides shorter than five residues are hydrolyzed (such as succinyl-Leu-Tyr-|-NHMec, and Leu-Tyr-Leu-|-Tyr-Trp, in which cleavage of the -Tyr-|-Leu- and -Tyr-|-Trp bonds also occurs).</text>
        <dbReference type="EC" id="3.4.21.92"/>
    </reaction>
</comment>
<comment type="subunit">
    <text evidence="1">Fourteen ClpP subunits assemble into 2 heptameric rings which stack back to back to give a disk-like structure with a central cavity, resembling the structure of eukaryotic proteasomes.</text>
</comment>
<comment type="subcellular location">
    <subcellularLocation>
        <location evidence="1">Cytoplasm</location>
    </subcellularLocation>
</comment>
<comment type="similarity">
    <text evidence="1">Belongs to the peptidase S14 family.</text>
</comment>
<comment type="sequence caution" evidence="2">
    <conflict type="erroneous initiation">
        <sequence resource="EMBL-CDS" id="AAL03284"/>
    </conflict>
</comment>
<feature type="chain" id="PRO_0000179639" description="ATP-dependent Clp protease proteolytic subunit">
    <location>
        <begin position="1"/>
        <end position="201"/>
    </location>
</feature>
<feature type="active site" description="Nucleophile" evidence="1">
    <location>
        <position position="98"/>
    </location>
</feature>
<feature type="active site" evidence="1">
    <location>
        <position position="123"/>
    </location>
</feature>
<accession>Q92HM5</accession>
<protein>
    <recommendedName>
        <fullName evidence="1">ATP-dependent Clp protease proteolytic subunit</fullName>
        <ecNumber evidence="1">3.4.21.92</ecNumber>
    </recommendedName>
    <alternativeName>
        <fullName evidence="1">Endopeptidase Clp</fullName>
    </alternativeName>
</protein>
<keyword id="KW-0963">Cytoplasm</keyword>
<keyword id="KW-0378">Hydrolase</keyword>
<keyword id="KW-0645">Protease</keyword>
<keyword id="KW-0720">Serine protease</keyword>
<reference key="1">
    <citation type="journal article" date="2001" name="Science">
        <title>Mechanisms of evolution in Rickettsia conorii and R. prowazekii.</title>
        <authorList>
            <person name="Ogata H."/>
            <person name="Audic S."/>
            <person name="Renesto-Audiffren P."/>
            <person name="Fournier P.-E."/>
            <person name="Barbe V."/>
            <person name="Samson D."/>
            <person name="Roux V."/>
            <person name="Cossart P."/>
            <person name="Weissenbach J."/>
            <person name="Claverie J.-M."/>
            <person name="Raoult D."/>
        </authorList>
    </citation>
    <scope>NUCLEOTIDE SEQUENCE [LARGE SCALE GENOMIC DNA]</scope>
    <source>
        <strain>ATCC VR-613 / Malish 7</strain>
    </source>
</reference>
<gene>
    <name evidence="1" type="primary">clpP</name>
    <name type="ordered locus">RC0746</name>
</gene>
<evidence type="ECO:0000255" key="1">
    <source>
        <dbReference type="HAMAP-Rule" id="MF_00444"/>
    </source>
</evidence>
<evidence type="ECO:0000305" key="2"/>